<keyword id="KW-1185">Reference proteome</keyword>
<evidence type="ECO:0000256" key="1">
    <source>
        <dbReference type="SAM" id="MobiDB-lite"/>
    </source>
</evidence>
<evidence type="ECO:0000305" key="2"/>
<comment type="induction">
    <text>By blue light.</text>
</comment>
<comment type="sequence caution" evidence="2">
    <conflict type="erroneous initiation">
        <sequence resource="EMBL-CDS" id="EAA32885"/>
    </conflict>
</comment>
<name>BLI3_NEUCR</name>
<reference key="1">
    <citation type="journal article" date="1994" name="Biochem. Mol. Biol. Int.">
        <title>Neurospora crassa blue light-inducible gene bli-3.</title>
        <authorList>
            <person name="Eberle J."/>
            <person name="Russo V.E.A."/>
        </authorList>
    </citation>
    <scope>NUCLEOTIDE SEQUENCE [GENOMIC DNA]</scope>
    <source>
        <strain>STA</strain>
    </source>
</reference>
<reference key="2">
    <citation type="journal article" date="2003" name="Nature">
        <title>The genome sequence of the filamentous fungus Neurospora crassa.</title>
        <authorList>
            <person name="Galagan J.E."/>
            <person name="Calvo S.E."/>
            <person name="Borkovich K.A."/>
            <person name="Selker E.U."/>
            <person name="Read N.D."/>
            <person name="Jaffe D.B."/>
            <person name="FitzHugh W."/>
            <person name="Ma L.-J."/>
            <person name="Smirnov S."/>
            <person name="Purcell S."/>
            <person name="Rehman B."/>
            <person name="Elkins T."/>
            <person name="Engels R."/>
            <person name="Wang S."/>
            <person name="Nielsen C.B."/>
            <person name="Butler J."/>
            <person name="Endrizzi M."/>
            <person name="Qui D."/>
            <person name="Ianakiev P."/>
            <person name="Bell-Pedersen D."/>
            <person name="Nelson M.A."/>
            <person name="Werner-Washburne M."/>
            <person name="Selitrennikoff C.P."/>
            <person name="Kinsey J.A."/>
            <person name="Braun E.L."/>
            <person name="Zelter A."/>
            <person name="Schulte U."/>
            <person name="Kothe G.O."/>
            <person name="Jedd G."/>
            <person name="Mewes H.-W."/>
            <person name="Staben C."/>
            <person name="Marcotte E."/>
            <person name="Greenberg D."/>
            <person name="Roy A."/>
            <person name="Foley K."/>
            <person name="Naylor J."/>
            <person name="Stange-Thomann N."/>
            <person name="Barrett R."/>
            <person name="Gnerre S."/>
            <person name="Kamal M."/>
            <person name="Kamvysselis M."/>
            <person name="Mauceli E.W."/>
            <person name="Bielke C."/>
            <person name="Rudd S."/>
            <person name="Frishman D."/>
            <person name="Krystofova S."/>
            <person name="Rasmussen C."/>
            <person name="Metzenberg R.L."/>
            <person name="Perkins D.D."/>
            <person name="Kroken S."/>
            <person name="Cogoni C."/>
            <person name="Macino G."/>
            <person name="Catcheside D.E.A."/>
            <person name="Li W."/>
            <person name="Pratt R.J."/>
            <person name="Osmani S.A."/>
            <person name="DeSouza C.P.C."/>
            <person name="Glass N.L."/>
            <person name="Orbach M.J."/>
            <person name="Berglund J.A."/>
            <person name="Voelker R."/>
            <person name="Yarden O."/>
            <person name="Plamann M."/>
            <person name="Seiler S."/>
            <person name="Dunlap J.C."/>
            <person name="Radford A."/>
            <person name="Aramayo R."/>
            <person name="Natvig D.O."/>
            <person name="Alex L.A."/>
            <person name="Mannhaupt G."/>
            <person name="Ebbole D.J."/>
            <person name="Freitag M."/>
            <person name="Paulsen I."/>
            <person name="Sachs M.S."/>
            <person name="Lander E.S."/>
            <person name="Nusbaum C."/>
            <person name="Birren B.W."/>
        </authorList>
    </citation>
    <scope>NUCLEOTIDE SEQUENCE [LARGE SCALE GENOMIC DNA]</scope>
    <source>
        <strain>ATCC 24698 / 74-OR23-1A / CBS 708.71 / DSM 1257 / FGSC 987</strain>
    </source>
</reference>
<gene>
    <name type="primary">bli-3</name>
    <name type="ORF">NCU07267</name>
</gene>
<accession>Q01358</accession>
<accession>Q7RVF9</accession>
<protein>
    <recommendedName>
        <fullName>Protein bli-3</fullName>
    </recommendedName>
</protein>
<feature type="chain" id="PRO_0000064938" description="Protein bli-3">
    <location>
        <begin position="1"/>
        <end position="209"/>
    </location>
</feature>
<feature type="region of interest" description="Disordered" evidence="1">
    <location>
        <begin position="1"/>
        <end position="24"/>
    </location>
</feature>
<feature type="compositionally biased region" description="Polar residues" evidence="1">
    <location>
        <begin position="1"/>
        <end position="11"/>
    </location>
</feature>
<proteinExistence type="evidence at transcript level"/>
<dbReference type="EMBL" id="X81318">
    <property type="protein sequence ID" value="CAA57098.1"/>
    <property type="molecule type" value="Genomic_DNA"/>
</dbReference>
<dbReference type="EMBL" id="CM002239">
    <property type="protein sequence ID" value="EAA32885.2"/>
    <property type="status" value="ALT_INIT"/>
    <property type="molecule type" value="Genomic_DNA"/>
</dbReference>
<dbReference type="PIR" id="T47244">
    <property type="entry name" value="T47244"/>
</dbReference>
<dbReference type="RefSeq" id="XP_962121.2">
    <property type="nucleotide sequence ID" value="XM_957028.3"/>
</dbReference>
<dbReference type="SMR" id="Q01358"/>
<dbReference type="STRING" id="367110.Q01358"/>
<dbReference type="PaxDb" id="5141-EFNCRP00000007134"/>
<dbReference type="EnsemblFungi" id="EAA32885">
    <property type="protein sequence ID" value="EAA32885"/>
    <property type="gene ID" value="NCU07267"/>
</dbReference>
<dbReference type="GeneID" id="3878260"/>
<dbReference type="KEGG" id="ncr:NCU07267"/>
<dbReference type="HOGENOM" id="CLU_091428_0_0_1"/>
<dbReference type="InParanoid" id="Q01358"/>
<dbReference type="OrthoDB" id="434253at2759"/>
<dbReference type="Proteomes" id="UP000001805">
    <property type="component" value="Chromosome 4, Linkage Group IV"/>
</dbReference>
<dbReference type="Gene3D" id="2.30.110.10">
    <property type="entry name" value="Electron Transport, Fmn-binding Protein, Chain A"/>
    <property type="match status" value="1"/>
</dbReference>
<dbReference type="InterPro" id="IPR012349">
    <property type="entry name" value="Split_barrel_FMN-bd"/>
</dbReference>
<dbReference type="InterPro" id="IPR052917">
    <property type="entry name" value="Stress-Dev_Protein"/>
</dbReference>
<dbReference type="InterPro" id="IPR038725">
    <property type="entry name" value="YdaG_split_barrel_FMN-bd"/>
</dbReference>
<dbReference type="PANTHER" id="PTHR34818">
    <property type="entry name" value="PROTEIN BLI-3"/>
    <property type="match status" value="1"/>
</dbReference>
<dbReference type="PANTHER" id="PTHR34818:SF1">
    <property type="entry name" value="PROTEIN BLI-3"/>
    <property type="match status" value="1"/>
</dbReference>
<dbReference type="Pfam" id="PF16242">
    <property type="entry name" value="Pyrid_ox_like"/>
    <property type="match status" value="1"/>
</dbReference>
<dbReference type="SUPFAM" id="SSF50475">
    <property type="entry name" value="FMN-binding split barrel"/>
    <property type="match status" value="1"/>
</dbReference>
<sequence>MSGQGFSNADTGNKPADPYKQANLDTEVPLDQKINDLSSFMTSNKFSMMTTRDSKTGYLLSRCMALAATESGGIDLLFHTNTESGKTDDLKSDEHINISFLNSTTGDWASVSGTASIVTDRDLVRKHYNPHLKAWFGDLGDGVHDGGPEDPRVGVIRVKMVTAHYAISTKNIVGKVADVAQGVITGKPATVNKLREISEQEVQSWRSSH</sequence>
<organism>
    <name type="scientific">Neurospora crassa (strain ATCC 24698 / 74-OR23-1A / CBS 708.71 / DSM 1257 / FGSC 987)</name>
    <dbReference type="NCBI Taxonomy" id="367110"/>
    <lineage>
        <taxon>Eukaryota</taxon>
        <taxon>Fungi</taxon>
        <taxon>Dikarya</taxon>
        <taxon>Ascomycota</taxon>
        <taxon>Pezizomycotina</taxon>
        <taxon>Sordariomycetes</taxon>
        <taxon>Sordariomycetidae</taxon>
        <taxon>Sordariales</taxon>
        <taxon>Sordariaceae</taxon>
        <taxon>Neurospora</taxon>
    </lineage>
</organism>